<feature type="chain" id="PRO_1000192330" description="Phosphoenolpyruvate carboxykinase (ATP)">
    <location>
        <begin position="1"/>
        <end position="539"/>
    </location>
</feature>
<feature type="binding site" evidence="1">
    <location>
        <position position="64"/>
    </location>
    <ligand>
        <name>substrate</name>
    </ligand>
</feature>
<feature type="binding site" evidence="1">
    <location>
        <position position="206"/>
    </location>
    <ligand>
        <name>substrate</name>
    </ligand>
</feature>
<feature type="binding site" evidence="1">
    <location>
        <position position="212"/>
    </location>
    <ligand>
        <name>ATP</name>
        <dbReference type="ChEBI" id="CHEBI:30616"/>
    </ligand>
</feature>
<feature type="binding site" evidence="1">
    <location>
        <position position="212"/>
    </location>
    <ligand>
        <name>Mn(2+)</name>
        <dbReference type="ChEBI" id="CHEBI:29035"/>
    </ligand>
</feature>
<feature type="binding site" evidence="1">
    <location>
        <position position="212"/>
    </location>
    <ligand>
        <name>substrate</name>
    </ligand>
</feature>
<feature type="binding site" evidence="1">
    <location>
        <position position="231"/>
    </location>
    <ligand>
        <name>ATP</name>
        <dbReference type="ChEBI" id="CHEBI:30616"/>
    </ligand>
</feature>
<feature type="binding site" evidence="1">
    <location>
        <position position="231"/>
    </location>
    <ligand>
        <name>Mn(2+)</name>
        <dbReference type="ChEBI" id="CHEBI:29035"/>
    </ligand>
</feature>
<feature type="binding site" evidence="1">
    <location>
        <begin position="247"/>
        <end position="255"/>
    </location>
    <ligand>
        <name>ATP</name>
        <dbReference type="ChEBI" id="CHEBI:30616"/>
    </ligand>
</feature>
<feature type="binding site" evidence="1">
    <location>
        <position position="268"/>
    </location>
    <ligand>
        <name>Mn(2+)</name>
        <dbReference type="ChEBI" id="CHEBI:29035"/>
    </ligand>
</feature>
<feature type="binding site" evidence="1">
    <location>
        <position position="296"/>
    </location>
    <ligand>
        <name>ATP</name>
        <dbReference type="ChEBI" id="CHEBI:30616"/>
    </ligand>
</feature>
<feature type="binding site" evidence="1">
    <location>
        <position position="332"/>
    </location>
    <ligand>
        <name>ATP</name>
        <dbReference type="ChEBI" id="CHEBI:30616"/>
    </ligand>
</feature>
<feature type="binding site" evidence="1">
    <location>
        <position position="332"/>
    </location>
    <ligand>
        <name>substrate</name>
    </ligand>
</feature>
<feature type="binding site" evidence="1">
    <location>
        <begin position="448"/>
        <end position="449"/>
    </location>
    <ligand>
        <name>ATP</name>
        <dbReference type="ChEBI" id="CHEBI:30616"/>
    </ligand>
</feature>
<feature type="binding site" evidence="1">
    <location>
        <position position="454"/>
    </location>
    <ligand>
        <name>ATP</name>
        <dbReference type="ChEBI" id="CHEBI:30616"/>
    </ligand>
</feature>
<sequence>MRVNNLTPQDLKAYGINDVQDIVYNPSYDTLYQEELNPGLEGYERGVLTNLGAVAVDTGIFTGRSPKDKYIVRDDTTRDTLWWSDKGKGKNDNKPLSQETWQHLKGLVTHQLSGKRLFIVDAFCGANADTRLSVRFITEVAWQAHFVKNMFIRPTDEELVGFKPDFIVMNGAKCTNPQWKEQGLNSENFVAFNLTERIQLIGGTWYGGEMKKGMFSVMNYLLPLKGIASMHCSANVGEKGDVAVFFGLSGTGKTTLSTDPKRRLIGDDEHGWDDDGVFNFEGGCYAKTIKLSKEAEPEIYHAIRRDALLENVTVREDGTVDFDDGSKTENTRVSYPIYHIDNIVKPVSKAGHATKVIFLTADAFGVLPPVSRLTANQTQYHFLSGFTAKLAGTERGVTEPTPTFSACFGAAFLTLHPTQYAEVLVKRMQAAGAQAYLVNTGWNGTGKRISIKDTRAIIDAILNGSLDNAETFRLPLFDLAIPTELPGVDTHILDPRNTYASPEQWQEKATALAKLFIENFEKYTDTPAGEALVSAGPKL</sequence>
<organism>
    <name type="scientific">Salmonella paratyphi C (strain RKS4594)</name>
    <dbReference type="NCBI Taxonomy" id="476213"/>
    <lineage>
        <taxon>Bacteria</taxon>
        <taxon>Pseudomonadati</taxon>
        <taxon>Pseudomonadota</taxon>
        <taxon>Gammaproteobacteria</taxon>
        <taxon>Enterobacterales</taxon>
        <taxon>Enterobacteriaceae</taxon>
        <taxon>Salmonella</taxon>
    </lineage>
</organism>
<protein>
    <recommendedName>
        <fullName evidence="1">Phosphoenolpyruvate carboxykinase (ATP)</fullName>
        <shortName evidence="1">PCK</shortName>
        <shortName evidence="1">PEP carboxykinase</shortName>
        <shortName evidence="1">PEPCK</shortName>
        <ecNumber evidence="1">4.1.1.49</ecNumber>
    </recommendedName>
</protein>
<name>PCKA_SALPC</name>
<accession>C0Q0H5</accession>
<keyword id="KW-0067">ATP-binding</keyword>
<keyword id="KW-0963">Cytoplasm</keyword>
<keyword id="KW-0210">Decarboxylase</keyword>
<keyword id="KW-0312">Gluconeogenesis</keyword>
<keyword id="KW-0456">Lyase</keyword>
<keyword id="KW-0464">Manganese</keyword>
<keyword id="KW-0479">Metal-binding</keyword>
<keyword id="KW-0547">Nucleotide-binding</keyword>
<comment type="function">
    <text evidence="1">Involved in the gluconeogenesis. Catalyzes the conversion of oxaloacetate (OAA) to phosphoenolpyruvate (PEP) through direct phosphoryl transfer between the nucleoside triphosphate and OAA.</text>
</comment>
<comment type="catalytic activity">
    <reaction evidence="1">
        <text>oxaloacetate + ATP = phosphoenolpyruvate + ADP + CO2</text>
        <dbReference type="Rhea" id="RHEA:18617"/>
        <dbReference type="ChEBI" id="CHEBI:16452"/>
        <dbReference type="ChEBI" id="CHEBI:16526"/>
        <dbReference type="ChEBI" id="CHEBI:30616"/>
        <dbReference type="ChEBI" id="CHEBI:58702"/>
        <dbReference type="ChEBI" id="CHEBI:456216"/>
        <dbReference type="EC" id="4.1.1.49"/>
    </reaction>
</comment>
<comment type="cofactor">
    <cofactor evidence="1">
        <name>Mn(2+)</name>
        <dbReference type="ChEBI" id="CHEBI:29035"/>
    </cofactor>
    <text evidence="1">Binds 1 Mn(2+) ion per subunit.</text>
</comment>
<comment type="pathway">
    <text evidence="1">Carbohydrate biosynthesis; gluconeogenesis.</text>
</comment>
<comment type="subunit">
    <text evidence="1">Monomer.</text>
</comment>
<comment type="subcellular location">
    <subcellularLocation>
        <location evidence="1">Cytoplasm</location>
    </subcellularLocation>
</comment>
<comment type="similarity">
    <text evidence="1">Belongs to the phosphoenolpyruvate carboxykinase (ATP) family.</text>
</comment>
<gene>
    <name evidence="1" type="primary">pckA</name>
    <name type="ordered locus">SPC_3569</name>
</gene>
<reference key="1">
    <citation type="journal article" date="2009" name="PLoS ONE">
        <title>Salmonella paratyphi C: genetic divergence from Salmonella choleraesuis and pathogenic convergence with Salmonella typhi.</title>
        <authorList>
            <person name="Liu W.-Q."/>
            <person name="Feng Y."/>
            <person name="Wang Y."/>
            <person name="Zou Q.-H."/>
            <person name="Chen F."/>
            <person name="Guo J.-T."/>
            <person name="Peng Y.-H."/>
            <person name="Jin Y."/>
            <person name="Li Y.-G."/>
            <person name="Hu S.-N."/>
            <person name="Johnston R.N."/>
            <person name="Liu G.-R."/>
            <person name="Liu S.-L."/>
        </authorList>
    </citation>
    <scope>NUCLEOTIDE SEQUENCE [LARGE SCALE GENOMIC DNA]</scope>
    <source>
        <strain>RKS4594</strain>
    </source>
</reference>
<proteinExistence type="inferred from homology"/>
<evidence type="ECO:0000255" key="1">
    <source>
        <dbReference type="HAMAP-Rule" id="MF_00453"/>
    </source>
</evidence>
<dbReference type="EC" id="4.1.1.49" evidence="1"/>
<dbReference type="EMBL" id="CP000857">
    <property type="protein sequence ID" value="ACN47652.1"/>
    <property type="molecule type" value="Genomic_DNA"/>
</dbReference>
<dbReference type="RefSeq" id="WP_001265689.1">
    <property type="nucleotide sequence ID" value="NC_012125.1"/>
</dbReference>
<dbReference type="SMR" id="C0Q0H5"/>
<dbReference type="KEGG" id="sei:SPC_3569"/>
<dbReference type="HOGENOM" id="CLU_018247_0_1_6"/>
<dbReference type="UniPathway" id="UPA00138"/>
<dbReference type="Proteomes" id="UP000001599">
    <property type="component" value="Chromosome"/>
</dbReference>
<dbReference type="GO" id="GO:0005829">
    <property type="term" value="C:cytosol"/>
    <property type="evidence" value="ECO:0007669"/>
    <property type="project" value="TreeGrafter"/>
</dbReference>
<dbReference type="GO" id="GO:0005524">
    <property type="term" value="F:ATP binding"/>
    <property type="evidence" value="ECO:0007669"/>
    <property type="project" value="UniProtKB-UniRule"/>
</dbReference>
<dbReference type="GO" id="GO:0046872">
    <property type="term" value="F:metal ion binding"/>
    <property type="evidence" value="ECO:0007669"/>
    <property type="project" value="UniProtKB-KW"/>
</dbReference>
<dbReference type="GO" id="GO:0004612">
    <property type="term" value="F:phosphoenolpyruvate carboxykinase (ATP) activity"/>
    <property type="evidence" value="ECO:0007669"/>
    <property type="project" value="UniProtKB-UniRule"/>
</dbReference>
<dbReference type="GO" id="GO:0006094">
    <property type="term" value="P:gluconeogenesis"/>
    <property type="evidence" value="ECO:0007669"/>
    <property type="project" value="UniProtKB-UniRule"/>
</dbReference>
<dbReference type="CDD" id="cd00484">
    <property type="entry name" value="PEPCK_ATP"/>
    <property type="match status" value="1"/>
</dbReference>
<dbReference type="FunFam" id="2.170.8.10:FF:000001">
    <property type="entry name" value="Phosphoenolpyruvate carboxykinase (ATP)"/>
    <property type="match status" value="1"/>
</dbReference>
<dbReference type="FunFam" id="3.40.449.10:FF:000001">
    <property type="entry name" value="Phosphoenolpyruvate carboxykinase (ATP)"/>
    <property type="match status" value="1"/>
</dbReference>
<dbReference type="Gene3D" id="3.90.228.20">
    <property type="match status" value="1"/>
</dbReference>
<dbReference type="Gene3D" id="3.40.449.10">
    <property type="entry name" value="Phosphoenolpyruvate Carboxykinase, domain 1"/>
    <property type="match status" value="1"/>
</dbReference>
<dbReference type="Gene3D" id="2.170.8.10">
    <property type="entry name" value="Phosphoenolpyruvate Carboxykinase, domain 2"/>
    <property type="match status" value="1"/>
</dbReference>
<dbReference type="HAMAP" id="MF_00453">
    <property type="entry name" value="PEPCK_ATP"/>
    <property type="match status" value="1"/>
</dbReference>
<dbReference type="InterPro" id="IPR001272">
    <property type="entry name" value="PEP_carboxykinase_ATP"/>
</dbReference>
<dbReference type="InterPro" id="IPR013035">
    <property type="entry name" value="PEP_carboxykinase_C"/>
</dbReference>
<dbReference type="InterPro" id="IPR008210">
    <property type="entry name" value="PEP_carboxykinase_N"/>
</dbReference>
<dbReference type="InterPro" id="IPR015994">
    <property type="entry name" value="PEPCK_ATP_CS"/>
</dbReference>
<dbReference type="NCBIfam" id="TIGR00224">
    <property type="entry name" value="pckA"/>
    <property type="match status" value="1"/>
</dbReference>
<dbReference type="NCBIfam" id="NF006819">
    <property type="entry name" value="PRK09344.1-1"/>
    <property type="match status" value="1"/>
</dbReference>
<dbReference type="NCBIfam" id="NF006820">
    <property type="entry name" value="PRK09344.1-2"/>
    <property type="match status" value="1"/>
</dbReference>
<dbReference type="NCBIfam" id="NF006821">
    <property type="entry name" value="PRK09344.1-3"/>
    <property type="match status" value="1"/>
</dbReference>
<dbReference type="PANTHER" id="PTHR30031:SF0">
    <property type="entry name" value="PHOSPHOENOLPYRUVATE CARBOXYKINASE (ATP)"/>
    <property type="match status" value="1"/>
</dbReference>
<dbReference type="PANTHER" id="PTHR30031">
    <property type="entry name" value="PHOSPHOENOLPYRUVATE CARBOXYKINASE ATP"/>
    <property type="match status" value="1"/>
</dbReference>
<dbReference type="Pfam" id="PF01293">
    <property type="entry name" value="PEPCK_ATP"/>
    <property type="match status" value="1"/>
</dbReference>
<dbReference type="PIRSF" id="PIRSF006294">
    <property type="entry name" value="PEP_crbxkin"/>
    <property type="match status" value="1"/>
</dbReference>
<dbReference type="SUPFAM" id="SSF68923">
    <property type="entry name" value="PEP carboxykinase N-terminal domain"/>
    <property type="match status" value="1"/>
</dbReference>
<dbReference type="SUPFAM" id="SSF53795">
    <property type="entry name" value="PEP carboxykinase-like"/>
    <property type="match status" value="1"/>
</dbReference>
<dbReference type="PROSITE" id="PS00532">
    <property type="entry name" value="PEPCK_ATP"/>
    <property type="match status" value="1"/>
</dbReference>